<organism>
    <name type="scientific">Gallus gallus</name>
    <name type="common">Chicken</name>
    <dbReference type="NCBI Taxonomy" id="9031"/>
    <lineage>
        <taxon>Eukaryota</taxon>
        <taxon>Metazoa</taxon>
        <taxon>Chordata</taxon>
        <taxon>Craniata</taxon>
        <taxon>Vertebrata</taxon>
        <taxon>Euteleostomi</taxon>
        <taxon>Archelosauria</taxon>
        <taxon>Archosauria</taxon>
        <taxon>Dinosauria</taxon>
        <taxon>Saurischia</taxon>
        <taxon>Theropoda</taxon>
        <taxon>Coelurosauria</taxon>
        <taxon>Aves</taxon>
        <taxon>Neognathae</taxon>
        <taxon>Galloanserae</taxon>
        <taxon>Galliformes</taxon>
        <taxon>Phasianidae</taxon>
        <taxon>Phasianinae</taxon>
        <taxon>Gallus</taxon>
    </lineage>
</organism>
<protein>
    <recommendedName>
        <fullName>Sodium/hydrogen exchanger 8</fullName>
    </recommendedName>
    <alternativeName>
        <fullName>Na(+)/H(+) exchanger 8</fullName>
        <shortName>NHE-8</shortName>
    </alternativeName>
    <alternativeName>
        <fullName>Solute carrier family 9 member 8</fullName>
    </alternativeName>
</protein>
<comment type="function">
    <text evidence="1">Involved in pH regulation to eliminate acids generated by active metabolism or to counter adverse environmental conditions. Major proton extruding system driven by the inward sodium ion chemical gradient. Plays an important role in signal transduction (By similarity).</text>
</comment>
<comment type="subcellular location">
    <subcellularLocation>
        <location evidence="1">Golgi apparatus membrane</location>
        <topology evidence="1">Multi-pass membrane protein</topology>
    </subcellularLocation>
</comment>
<comment type="similarity">
    <text evidence="3">Belongs to the monovalent cation:proton antiporter 1 (CPA1) transporter (TC 2.A.36) family.</text>
</comment>
<feature type="chain" id="PRO_0000379804" description="Sodium/hydrogen exchanger 8">
    <location>
        <begin position="1"/>
        <end position="574"/>
    </location>
</feature>
<feature type="transmembrane region" description="Helical" evidence="2">
    <location>
        <begin position="53"/>
        <end position="73"/>
    </location>
</feature>
<feature type="transmembrane region" description="Helical" evidence="2">
    <location>
        <begin position="77"/>
        <end position="97"/>
    </location>
</feature>
<feature type="transmembrane region" description="Helical" evidence="2">
    <location>
        <begin position="116"/>
        <end position="136"/>
    </location>
</feature>
<feature type="transmembrane region" description="Helical" evidence="2">
    <location>
        <begin position="149"/>
        <end position="169"/>
    </location>
</feature>
<feature type="transmembrane region" description="Helical" evidence="2">
    <location>
        <begin position="184"/>
        <end position="204"/>
    </location>
</feature>
<feature type="transmembrane region" description="Helical" evidence="2">
    <location>
        <begin position="254"/>
        <end position="274"/>
    </location>
</feature>
<feature type="transmembrane region" description="Helical" evidence="2">
    <location>
        <begin position="304"/>
        <end position="324"/>
    </location>
</feature>
<feature type="transmembrane region" description="Helical" evidence="2">
    <location>
        <begin position="347"/>
        <end position="367"/>
    </location>
</feature>
<feature type="transmembrane region" description="Helical" evidence="2">
    <location>
        <begin position="373"/>
        <end position="393"/>
    </location>
</feature>
<feature type="transmembrane region" description="Helical" evidence="2">
    <location>
        <begin position="410"/>
        <end position="430"/>
    </location>
</feature>
<feature type="transmembrane region" description="Helical" evidence="2">
    <location>
        <begin position="444"/>
        <end position="464"/>
    </location>
</feature>
<accession>Q5ZJ75</accession>
<proteinExistence type="evidence at transcript level"/>
<name>SL9A8_CHICK</name>
<reference key="1">
    <citation type="journal article" date="2005" name="Genome Biol.">
        <title>Full-length cDNAs from chicken bursal lymphocytes to facilitate gene function analysis.</title>
        <authorList>
            <person name="Caldwell R.B."/>
            <person name="Kierzek A.M."/>
            <person name="Arakawa H."/>
            <person name="Bezzubov Y."/>
            <person name="Zaim J."/>
            <person name="Fiedler P."/>
            <person name="Kutter S."/>
            <person name="Blagodatski A."/>
            <person name="Kostovska D."/>
            <person name="Koter M."/>
            <person name="Plachy J."/>
            <person name="Carninci P."/>
            <person name="Hayashizaki Y."/>
            <person name="Buerstedde J.-M."/>
        </authorList>
    </citation>
    <scope>NUCLEOTIDE SEQUENCE [LARGE SCALE MRNA]</scope>
    <source>
        <strain>CB</strain>
        <tissue>Bursa of Fabricius</tissue>
    </source>
</reference>
<dbReference type="EMBL" id="AJ720559">
    <property type="protein sequence ID" value="CAG32218.1"/>
    <property type="molecule type" value="mRNA"/>
</dbReference>
<dbReference type="RefSeq" id="NP_001034364.1">
    <property type="nucleotide sequence ID" value="NM_001039275.2"/>
</dbReference>
<dbReference type="SMR" id="Q5ZJ75"/>
<dbReference type="FunCoup" id="Q5ZJ75">
    <property type="interactions" value="529"/>
</dbReference>
<dbReference type="STRING" id="9031.ENSGALP00000013041"/>
<dbReference type="GlyGen" id="Q5ZJ75">
    <property type="glycosylation" value="1 site"/>
</dbReference>
<dbReference type="PaxDb" id="9031-ENSGALP00000013041"/>
<dbReference type="GeneID" id="419356"/>
<dbReference type="KEGG" id="gga:419356"/>
<dbReference type="CTD" id="23315"/>
<dbReference type="VEuPathDB" id="HostDB:geneid_419356"/>
<dbReference type="eggNOG" id="KOG1965">
    <property type="taxonomic scope" value="Eukaryota"/>
</dbReference>
<dbReference type="InParanoid" id="Q5ZJ75"/>
<dbReference type="OrthoDB" id="196264at2759"/>
<dbReference type="PhylomeDB" id="Q5ZJ75"/>
<dbReference type="PRO" id="PR:Q5ZJ75"/>
<dbReference type="Proteomes" id="UP000000539">
    <property type="component" value="Unassembled WGS sequence"/>
</dbReference>
<dbReference type="GO" id="GO:0000139">
    <property type="term" value="C:Golgi membrane"/>
    <property type="evidence" value="ECO:0007669"/>
    <property type="project" value="UniProtKB-SubCell"/>
</dbReference>
<dbReference type="GO" id="GO:0015386">
    <property type="term" value="F:potassium:proton antiporter activity"/>
    <property type="evidence" value="ECO:0000318"/>
    <property type="project" value="GO_Central"/>
</dbReference>
<dbReference type="GO" id="GO:0015385">
    <property type="term" value="F:sodium:proton antiporter activity"/>
    <property type="evidence" value="ECO:0000318"/>
    <property type="project" value="GO_Central"/>
</dbReference>
<dbReference type="GO" id="GO:0071805">
    <property type="term" value="P:potassium ion transmembrane transport"/>
    <property type="evidence" value="ECO:0000318"/>
    <property type="project" value="GO_Central"/>
</dbReference>
<dbReference type="GO" id="GO:0051453">
    <property type="term" value="P:regulation of intracellular pH"/>
    <property type="evidence" value="ECO:0000318"/>
    <property type="project" value="GO_Central"/>
</dbReference>
<dbReference type="Gene3D" id="6.10.140.1330">
    <property type="match status" value="1"/>
</dbReference>
<dbReference type="InterPro" id="IPR018422">
    <property type="entry name" value="Cation/H_exchanger_CPA1"/>
</dbReference>
<dbReference type="InterPro" id="IPR006153">
    <property type="entry name" value="Cation/H_exchanger_TM"/>
</dbReference>
<dbReference type="InterPro" id="IPR004709">
    <property type="entry name" value="NaH_exchanger"/>
</dbReference>
<dbReference type="NCBIfam" id="TIGR00840">
    <property type="entry name" value="b_cpa1"/>
    <property type="match status" value="1"/>
</dbReference>
<dbReference type="PANTHER" id="PTHR10110">
    <property type="entry name" value="SODIUM/HYDROGEN EXCHANGER"/>
    <property type="match status" value="1"/>
</dbReference>
<dbReference type="PANTHER" id="PTHR10110:SF191">
    <property type="entry name" value="SODIUM_HYDROGEN EXCHANGER 8"/>
    <property type="match status" value="1"/>
</dbReference>
<dbReference type="Pfam" id="PF00999">
    <property type="entry name" value="Na_H_Exchanger"/>
    <property type="match status" value="1"/>
</dbReference>
<dbReference type="PRINTS" id="PR01084">
    <property type="entry name" value="NAHEXCHNGR"/>
</dbReference>
<sequence length="574" mass="64133">MAEFANASHEVINVTLGTTLAATTKLVMPTPAKPILPVQTGVQAQQEEQSSGMTIFFSLLVLAICIILVHLLIKYRLHFLPESVAVVSLGIIMGAFIKIIEAQKLANWKEEEMFRPNMFFLLLLPPIIFESGYSLHKGNFFQNIGSITLFSVFGTAISAFIVGGGIYFLGQADVIYKLNMTDSFAFGSLISAVDPVATIAIFNALNVDPVLNMLVFGESILNDAVSIVLTNTAEGLTRENMSDVSGWQTFLQALGYFLKMFFGSAALGTLTGLISALVLKHIDLRKTPSLEFGMMIIFAYLPYGLAEGISLSGIMAILFSGIVMSHYTHHNLSPVTQILMQQTLRTVAFMCETCVFAFLGLSIFSFPHKFEMSFVIWCIVLVLFGRAVNIFPLSYLLNFFRDHKITPKMMFIMWFSGLRGAIPYALSLHLGLEPIEKRQLIGTTTIIIVLFTVLLLGGGTMPLIRLIGIEDSKARKRNKKDVNLSKTEKMGNTIESEHLSELTEGEYEAQYIKRQDLKGFMWLDAKYLNPFFTRRLTQEDLHHGRIQMKTLTNKWYEEVRQGPSGSEDDEQELL</sequence>
<evidence type="ECO:0000250" key="1"/>
<evidence type="ECO:0000255" key="2"/>
<evidence type="ECO:0000305" key="3"/>
<keyword id="KW-0050">Antiport</keyword>
<keyword id="KW-0333">Golgi apparatus</keyword>
<keyword id="KW-0406">Ion transport</keyword>
<keyword id="KW-0472">Membrane</keyword>
<keyword id="KW-1185">Reference proteome</keyword>
<keyword id="KW-0915">Sodium</keyword>
<keyword id="KW-0739">Sodium transport</keyword>
<keyword id="KW-0812">Transmembrane</keyword>
<keyword id="KW-1133">Transmembrane helix</keyword>
<keyword id="KW-0813">Transport</keyword>